<sequence>MNIYRTHLCNELREEHINQEVILSGWVYRKRDHGKIIFVDLRDHYGITQLVFNEADNEIFQLISYLKLESVITIKGTVVARDSSTINTTVSTGLIEVVVNHVTIESEANLLPMNIASTQEYPEDIRFKYRFLDLRRDKVKHNIILRSKVIAELRKSMENMGFIEIQTPILTSSSPEGARDYLVPSRIHHGKFYALPQAPQLFKQILMVSGFDKYFQIAPCFRDEDARADRSPGEFYQLDMEMSFVTQEDVFNVIEPVLLNIFSKFSSKTIHKEFPRISYHNAMLYYGSDKPDLRNPLIIQDVTEIFRDSQFNIFNSNIKKGMVVRAIPAPKTANNPRSFFDNKIEFAKTLGAQGLGYITFNDDSSAKGPIAKFLDEERLNKIKSICNLQTGDSVFFVSETEDKAAEFAGEIRTILGTELNLIEPDTFRFCWVVDFPYFKYDKKEKSIGFFHNPFSMPQGGLEALNNQDPLSILAYQYDIVCNGIEISSGAIRNHKLDIMYKAFSIAGYTQEMVDKKFNSLTRAFKFGAPPHGGIAPGIDRMVMLLADATNIREVICFPLNQSGEDLLMGAPSEIDTEHLKLLSLNITKKS</sequence>
<dbReference type="EC" id="6.1.1.23" evidence="1"/>
<dbReference type="EMBL" id="CP000107">
    <property type="protein sequence ID" value="AAZ68704.1"/>
    <property type="molecule type" value="Genomic_DNA"/>
</dbReference>
<dbReference type="RefSeq" id="WP_011304781.1">
    <property type="nucleotide sequence ID" value="NC_007354.1"/>
</dbReference>
<dbReference type="SMR" id="Q3YRF1"/>
<dbReference type="FunCoup" id="Q3YRF1">
    <property type="interactions" value="329"/>
</dbReference>
<dbReference type="STRING" id="269484.Ecaj_0672"/>
<dbReference type="KEGG" id="ecn:Ecaj_0672"/>
<dbReference type="eggNOG" id="COG0173">
    <property type="taxonomic scope" value="Bacteria"/>
</dbReference>
<dbReference type="HOGENOM" id="CLU_014330_3_2_5"/>
<dbReference type="InParanoid" id="Q3YRF1"/>
<dbReference type="Proteomes" id="UP000000435">
    <property type="component" value="Chromosome"/>
</dbReference>
<dbReference type="GO" id="GO:0005737">
    <property type="term" value="C:cytoplasm"/>
    <property type="evidence" value="ECO:0007669"/>
    <property type="project" value="UniProtKB-SubCell"/>
</dbReference>
<dbReference type="GO" id="GO:0004815">
    <property type="term" value="F:aspartate-tRNA ligase activity"/>
    <property type="evidence" value="ECO:0007669"/>
    <property type="project" value="UniProtKB-UniRule"/>
</dbReference>
<dbReference type="GO" id="GO:0050560">
    <property type="term" value="F:aspartate-tRNA(Asn) ligase activity"/>
    <property type="evidence" value="ECO:0007669"/>
    <property type="project" value="UniProtKB-EC"/>
</dbReference>
<dbReference type="GO" id="GO:0005524">
    <property type="term" value="F:ATP binding"/>
    <property type="evidence" value="ECO:0007669"/>
    <property type="project" value="UniProtKB-UniRule"/>
</dbReference>
<dbReference type="GO" id="GO:0003676">
    <property type="term" value="F:nucleic acid binding"/>
    <property type="evidence" value="ECO:0007669"/>
    <property type="project" value="InterPro"/>
</dbReference>
<dbReference type="GO" id="GO:0006422">
    <property type="term" value="P:aspartyl-tRNA aminoacylation"/>
    <property type="evidence" value="ECO:0007669"/>
    <property type="project" value="UniProtKB-UniRule"/>
</dbReference>
<dbReference type="CDD" id="cd00777">
    <property type="entry name" value="AspRS_core"/>
    <property type="match status" value="1"/>
</dbReference>
<dbReference type="CDD" id="cd04317">
    <property type="entry name" value="EcAspRS_like_N"/>
    <property type="match status" value="1"/>
</dbReference>
<dbReference type="Gene3D" id="3.30.930.10">
    <property type="entry name" value="Bira Bifunctional Protein, Domain 2"/>
    <property type="match status" value="1"/>
</dbReference>
<dbReference type="Gene3D" id="3.30.1360.30">
    <property type="entry name" value="GAD-like domain"/>
    <property type="match status" value="1"/>
</dbReference>
<dbReference type="Gene3D" id="2.40.50.140">
    <property type="entry name" value="Nucleic acid-binding proteins"/>
    <property type="match status" value="1"/>
</dbReference>
<dbReference type="HAMAP" id="MF_00044">
    <property type="entry name" value="Asp_tRNA_synth_type1"/>
    <property type="match status" value="1"/>
</dbReference>
<dbReference type="InterPro" id="IPR004364">
    <property type="entry name" value="Aa-tRNA-synt_II"/>
</dbReference>
<dbReference type="InterPro" id="IPR006195">
    <property type="entry name" value="aa-tRNA-synth_II"/>
</dbReference>
<dbReference type="InterPro" id="IPR045864">
    <property type="entry name" value="aa-tRNA-synth_II/BPL/LPL"/>
</dbReference>
<dbReference type="InterPro" id="IPR004524">
    <property type="entry name" value="Asp-tRNA-ligase_1"/>
</dbReference>
<dbReference type="InterPro" id="IPR047089">
    <property type="entry name" value="Asp-tRNA-ligase_1_N"/>
</dbReference>
<dbReference type="InterPro" id="IPR002312">
    <property type="entry name" value="Asp/Asn-tRNA-synth_IIb"/>
</dbReference>
<dbReference type="InterPro" id="IPR047090">
    <property type="entry name" value="AspRS_core"/>
</dbReference>
<dbReference type="InterPro" id="IPR004115">
    <property type="entry name" value="GAD-like_sf"/>
</dbReference>
<dbReference type="InterPro" id="IPR029351">
    <property type="entry name" value="GAD_dom"/>
</dbReference>
<dbReference type="InterPro" id="IPR012340">
    <property type="entry name" value="NA-bd_OB-fold"/>
</dbReference>
<dbReference type="InterPro" id="IPR004365">
    <property type="entry name" value="NA-bd_OB_tRNA"/>
</dbReference>
<dbReference type="NCBIfam" id="TIGR00459">
    <property type="entry name" value="aspS_bact"/>
    <property type="match status" value="1"/>
</dbReference>
<dbReference type="NCBIfam" id="NF001750">
    <property type="entry name" value="PRK00476.1"/>
    <property type="match status" value="1"/>
</dbReference>
<dbReference type="PANTHER" id="PTHR22594:SF5">
    <property type="entry name" value="ASPARTATE--TRNA LIGASE, MITOCHONDRIAL"/>
    <property type="match status" value="1"/>
</dbReference>
<dbReference type="PANTHER" id="PTHR22594">
    <property type="entry name" value="ASPARTYL/LYSYL-TRNA SYNTHETASE"/>
    <property type="match status" value="1"/>
</dbReference>
<dbReference type="Pfam" id="PF02938">
    <property type="entry name" value="GAD"/>
    <property type="match status" value="1"/>
</dbReference>
<dbReference type="Pfam" id="PF00152">
    <property type="entry name" value="tRNA-synt_2"/>
    <property type="match status" value="1"/>
</dbReference>
<dbReference type="Pfam" id="PF01336">
    <property type="entry name" value="tRNA_anti-codon"/>
    <property type="match status" value="1"/>
</dbReference>
<dbReference type="PRINTS" id="PR01042">
    <property type="entry name" value="TRNASYNTHASP"/>
</dbReference>
<dbReference type="SUPFAM" id="SSF55681">
    <property type="entry name" value="Class II aaRS and biotin synthetases"/>
    <property type="match status" value="1"/>
</dbReference>
<dbReference type="SUPFAM" id="SSF55261">
    <property type="entry name" value="GAD domain-like"/>
    <property type="match status" value="1"/>
</dbReference>
<dbReference type="SUPFAM" id="SSF50249">
    <property type="entry name" value="Nucleic acid-binding proteins"/>
    <property type="match status" value="1"/>
</dbReference>
<dbReference type="PROSITE" id="PS50862">
    <property type="entry name" value="AA_TRNA_LIGASE_II"/>
    <property type="match status" value="1"/>
</dbReference>
<proteinExistence type="inferred from homology"/>
<organism>
    <name type="scientific">Ehrlichia canis (strain Jake)</name>
    <dbReference type="NCBI Taxonomy" id="269484"/>
    <lineage>
        <taxon>Bacteria</taxon>
        <taxon>Pseudomonadati</taxon>
        <taxon>Pseudomonadota</taxon>
        <taxon>Alphaproteobacteria</taxon>
        <taxon>Rickettsiales</taxon>
        <taxon>Anaplasmataceae</taxon>
        <taxon>Ehrlichia</taxon>
    </lineage>
</organism>
<gene>
    <name evidence="1" type="primary">aspS</name>
    <name type="ordered locus">Ecaj_0672</name>
</gene>
<comment type="function">
    <text evidence="1">Aspartyl-tRNA synthetase with relaxed tRNA specificity since it is able to aspartylate not only its cognate tRNA(Asp) but also tRNA(Asn). Reaction proceeds in two steps: L-aspartate is first activated by ATP to form Asp-AMP and then transferred to the acceptor end of tRNA(Asp/Asn).</text>
</comment>
<comment type="catalytic activity">
    <reaction evidence="1">
        <text>tRNA(Asx) + L-aspartate + ATP = L-aspartyl-tRNA(Asx) + AMP + diphosphate</text>
        <dbReference type="Rhea" id="RHEA:18349"/>
        <dbReference type="Rhea" id="RHEA-COMP:9710"/>
        <dbReference type="Rhea" id="RHEA-COMP:9711"/>
        <dbReference type="ChEBI" id="CHEBI:29991"/>
        <dbReference type="ChEBI" id="CHEBI:30616"/>
        <dbReference type="ChEBI" id="CHEBI:33019"/>
        <dbReference type="ChEBI" id="CHEBI:78442"/>
        <dbReference type="ChEBI" id="CHEBI:78516"/>
        <dbReference type="ChEBI" id="CHEBI:456215"/>
        <dbReference type="EC" id="6.1.1.23"/>
    </reaction>
</comment>
<comment type="subunit">
    <text evidence="1">Homodimer.</text>
</comment>
<comment type="subcellular location">
    <subcellularLocation>
        <location evidence="1">Cytoplasm</location>
    </subcellularLocation>
</comment>
<comment type="similarity">
    <text evidence="1">Belongs to the class-II aminoacyl-tRNA synthetase family. Type 1 subfamily.</text>
</comment>
<keyword id="KW-0030">Aminoacyl-tRNA synthetase</keyword>
<keyword id="KW-0067">ATP-binding</keyword>
<keyword id="KW-0963">Cytoplasm</keyword>
<keyword id="KW-0436">Ligase</keyword>
<keyword id="KW-0547">Nucleotide-binding</keyword>
<keyword id="KW-0648">Protein biosynthesis</keyword>
<protein>
    <recommendedName>
        <fullName evidence="1">Aspartate--tRNA(Asp/Asn) ligase</fullName>
        <ecNumber evidence="1">6.1.1.23</ecNumber>
    </recommendedName>
    <alternativeName>
        <fullName evidence="1">Aspartyl-tRNA synthetase</fullName>
        <shortName evidence="1">AspRS</shortName>
    </alternativeName>
    <alternativeName>
        <fullName evidence="1">Non-discriminating aspartyl-tRNA synthetase</fullName>
        <shortName evidence="1">ND-AspRS</shortName>
    </alternativeName>
</protein>
<reference key="1">
    <citation type="journal article" date="2006" name="J. Bacteriol.">
        <title>The genome of the obligately intracellular bacterium Ehrlichia canis reveals themes of complex membrane structure and immune evasion strategies.</title>
        <authorList>
            <person name="Mavromatis K."/>
            <person name="Doyle C.K."/>
            <person name="Lykidis A."/>
            <person name="Ivanova N."/>
            <person name="Francino M.P."/>
            <person name="Chain P."/>
            <person name="Shin M."/>
            <person name="Malfatti S."/>
            <person name="Larimer F."/>
            <person name="Copeland A."/>
            <person name="Detter J.C."/>
            <person name="Land M."/>
            <person name="Richardson P.M."/>
            <person name="Yu X.J."/>
            <person name="Walker D.H."/>
            <person name="McBride J.W."/>
            <person name="Kyrpides N.C."/>
        </authorList>
    </citation>
    <scope>NUCLEOTIDE SEQUENCE [LARGE SCALE GENOMIC DNA]</scope>
    <source>
        <strain>Jake</strain>
    </source>
</reference>
<name>SYDND_EHRCJ</name>
<feature type="chain" id="PRO_0000235526" description="Aspartate--tRNA(Asp/Asn) ligase">
    <location>
        <begin position="1"/>
        <end position="590"/>
    </location>
</feature>
<feature type="region of interest" description="Aspartate" evidence="1">
    <location>
        <begin position="200"/>
        <end position="203"/>
    </location>
</feature>
<feature type="binding site" evidence="1">
    <location>
        <position position="176"/>
    </location>
    <ligand>
        <name>L-aspartate</name>
        <dbReference type="ChEBI" id="CHEBI:29991"/>
    </ligand>
</feature>
<feature type="binding site" evidence="1">
    <location>
        <begin position="222"/>
        <end position="224"/>
    </location>
    <ligand>
        <name>ATP</name>
        <dbReference type="ChEBI" id="CHEBI:30616"/>
    </ligand>
</feature>
<feature type="binding site" evidence="1">
    <location>
        <position position="222"/>
    </location>
    <ligand>
        <name>L-aspartate</name>
        <dbReference type="ChEBI" id="CHEBI:29991"/>
    </ligand>
</feature>
<feature type="binding site" evidence="1">
    <location>
        <position position="451"/>
    </location>
    <ligand>
        <name>L-aspartate</name>
        <dbReference type="ChEBI" id="CHEBI:29991"/>
    </ligand>
</feature>
<feature type="binding site" evidence="1">
    <location>
        <position position="485"/>
    </location>
    <ligand>
        <name>ATP</name>
        <dbReference type="ChEBI" id="CHEBI:30616"/>
    </ligand>
</feature>
<feature type="binding site" evidence="1">
    <location>
        <position position="492"/>
    </location>
    <ligand>
        <name>L-aspartate</name>
        <dbReference type="ChEBI" id="CHEBI:29991"/>
    </ligand>
</feature>
<feature type="binding site" evidence="1">
    <location>
        <begin position="537"/>
        <end position="540"/>
    </location>
    <ligand>
        <name>ATP</name>
        <dbReference type="ChEBI" id="CHEBI:30616"/>
    </ligand>
</feature>
<feature type="site" description="Important for tRNA non-discrimination" evidence="1">
    <location>
        <position position="33"/>
    </location>
</feature>
<evidence type="ECO:0000255" key="1">
    <source>
        <dbReference type="HAMAP-Rule" id="MF_00044"/>
    </source>
</evidence>
<accession>Q3YRF1</accession>